<feature type="transit peptide" description="Mitochondrion" evidence="1">
    <location>
        <begin position="1" status="less than"/>
        <end position="8"/>
    </location>
</feature>
<feature type="chain" id="PRO_0000014437" description="Isocitrate dehydrogenase [NAD] subunit alpha, mitochondrial">
    <location>
        <begin position="9"/>
        <end position="347"/>
    </location>
</feature>
<feature type="binding site" evidence="3">
    <location>
        <begin position="14"/>
        <end position="42"/>
    </location>
    <ligand>
        <name>NAD(+)</name>
        <dbReference type="ChEBI" id="CHEBI:57540"/>
    </ligand>
</feature>
<feature type="binding site" evidence="1">
    <location>
        <position position="96"/>
    </location>
    <ligand>
        <name>substrate</name>
    </ligand>
</feature>
<feature type="binding site" evidence="1">
    <location>
        <position position="106"/>
    </location>
    <ligand>
        <name>substrate</name>
    </ligand>
</feature>
<feature type="binding site" evidence="1">
    <location>
        <position position="127"/>
    </location>
    <ligand>
        <name>substrate</name>
    </ligand>
</feature>
<feature type="binding site" evidence="1">
    <location>
        <position position="214"/>
    </location>
    <ligand>
        <name>Mg(2+)</name>
        <dbReference type="ChEBI" id="CHEBI:18420"/>
    </ligand>
</feature>
<feature type="binding site" evidence="1">
    <location>
        <position position="238"/>
    </location>
    <ligand>
        <name>Mg(2+)</name>
        <dbReference type="ChEBI" id="CHEBI:18420"/>
    </ligand>
</feature>
<feature type="binding site" evidence="1">
    <location>
        <position position="242"/>
    </location>
    <ligand>
        <name>Mg(2+)</name>
        <dbReference type="ChEBI" id="CHEBI:18420"/>
    </ligand>
</feature>
<feature type="site" description="Critical for catalysis" evidence="1">
    <location>
        <position position="134"/>
    </location>
</feature>
<feature type="site" description="Critical for catalysis" evidence="1">
    <location>
        <position position="181"/>
    </location>
</feature>
<feature type="modified residue" description="N6-succinyllysine" evidence="2">
    <location>
        <position position="58"/>
    </location>
</feature>
<feature type="modified residue" description="Phosphothreonine" evidence="2">
    <location>
        <position position="82"/>
    </location>
</feature>
<feature type="modified residue" description="N6-acetyllysine" evidence="2">
    <location>
        <position position="204"/>
    </location>
</feature>
<feature type="modified residue" description="N6-acetyllysine; alternate" evidence="1">
    <location>
        <position position="324"/>
    </location>
</feature>
<feature type="modified residue" description="N6-succinyllysine; alternate" evidence="2">
    <location>
        <position position="324"/>
    </location>
</feature>
<feature type="modified residue" description="N6-succinyllysine" evidence="2">
    <location>
        <position position="331"/>
    </location>
</feature>
<feature type="non-terminal residue">
    <location>
        <position position="1"/>
    </location>
</feature>
<evidence type="ECO:0000250" key="1">
    <source>
        <dbReference type="UniProtKB" id="P50213"/>
    </source>
</evidence>
<evidence type="ECO:0000250" key="2">
    <source>
        <dbReference type="UniProtKB" id="Q9D6R2"/>
    </source>
</evidence>
<evidence type="ECO:0000255" key="3"/>
<evidence type="ECO:0000305" key="4"/>
<sequence>QKQVTRGFTGGVQTVTLIPGDGIGPEISAAVMKIFDAAKAPIQWEERNVTAIQGPGGKWMIPSEAKESMDKNKMGLKGPLKTPIAAGHPSMNLLLRKTFDLYANVRPCVSIEGYKTPYTDVNIVTIRENTEGEYSGIEHVIVDGVVQSIKLITEGGSKRIAEFAFEYARNNHRSNVTAVHKANIMRMSDGLFLQKCREVAENCKDIKFNEMYLDTVCLNMVQDPSQFDVLVMPNLYGDILSDLCAGLIGGLGVTPSGNIGANGVAIFESVHGTAPDIAGKDMANPTALLLSAVMMLRHMGLFDHAARIEAACFATIKDGKSLTKDLGGNAKCSDFTEEICRRVKDLD</sequence>
<gene>
    <name type="primary">IDH3A</name>
</gene>
<dbReference type="EC" id="1.1.1.41" evidence="1"/>
<dbReference type="EMBL" id="X87172">
    <property type="protein sequence ID" value="CAA60637.1"/>
    <property type="status" value="ALT_INIT"/>
    <property type="molecule type" value="mRNA"/>
</dbReference>
<dbReference type="PIR" id="S58664">
    <property type="entry name" value="S58664"/>
</dbReference>
<dbReference type="SMR" id="Q28480"/>
<dbReference type="IntAct" id="Q28480">
    <property type="interactions" value="1"/>
</dbReference>
<dbReference type="MINT" id="Q28480"/>
<dbReference type="STRING" id="9541.ENSMFAP00000001379"/>
<dbReference type="eggNOG" id="KOG0785">
    <property type="taxonomic scope" value="Eukaryota"/>
</dbReference>
<dbReference type="Proteomes" id="UP000233100">
    <property type="component" value="Unplaced"/>
</dbReference>
<dbReference type="GO" id="GO:0005739">
    <property type="term" value="C:mitochondrion"/>
    <property type="evidence" value="ECO:0007669"/>
    <property type="project" value="UniProtKB-SubCell"/>
</dbReference>
<dbReference type="GO" id="GO:0004449">
    <property type="term" value="F:isocitrate dehydrogenase (NAD+) activity"/>
    <property type="evidence" value="ECO:0000250"/>
    <property type="project" value="UniProtKB"/>
</dbReference>
<dbReference type="GO" id="GO:0000287">
    <property type="term" value="F:magnesium ion binding"/>
    <property type="evidence" value="ECO:0000250"/>
    <property type="project" value="UniProtKB"/>
</dbReference>
<dbReference type="GO" id="GO:0051287">
    <property type="term" value="F:NAD binding"/>
    <property type="evidence" value="ECO:0007669"/>
    <property type="project" value="InterPro"/>
</dbReference>
<dbReference type="GO" id="GO:0006102">
    <property type="term" value="P:isocitrate metabolic process"/>
    <property type="evidence" value="ECO:0007669"/>
    <property type="project" value="TreeGrafter"/>
</dbReference>
<dbReference type="GO" id="GO:0006099">
    <property type="term" value="P:tricarboxylic acid cycle"/>
    <property type="evidence" value="ECO:0007669"/>
    <property type="project" value="UniProtKB-KW"/>
</dbReference>
<dbReference type="FunFam" id="3.40.718.10:FF:000003">
    <property type="entry name" value="Isocitrate dehydrogenase [NAD] subunit, mitochondrial"/>
    <property type="match status" value="1"/>
</dbReference>
<dbReference type="Gene3D" id="3.40.718.10">
    <property type="entry name" value="Isopropylmalate Dehydrogenase"/>
    <property type="match status" value="1"/>
</dbReference>
<dbReference type="InterPro" id="IPR019818">
    <property type="entry name" value="IsoCit/isopropylmalate_DH_CS"/>
</dbReference>
<dbReference type="InterPro" id="IPR004434">
    <property type="entry name" value="Isocitrate_DH_NAD"/>
</dbReference>
<dbReference type="InterPro" id="IPR024084">
    <property type="entry name" value="IsoPropMal-DH-like_dom"/>
</dbReference>
<dbReference type="NCBIfam" id="TIGR00175">
    <property type="entry name" value="mito_nad_idh"/>
    <property type="match status" value="1"/>
</dbReference>
<dbReference type="PANTHER" id="PTHR11835">
    <property type="entry name" value="DECARBOXYLATING DEHYDROGENASES-ISOCITRATE, ISOPROPYLMALATE, TARTRATE"/>
    <property type="match status" value="1"/>
</dbReference>
<dbReference type="PANTHER" id="PTHR11835:SF34">
    <property type="entry name" value="ISOCITRATE DEHYDROGENASE [NAD] SUBUNIT ALPHA, MITOCHONDRIAL"/>
    <property type="match status" value="1"/>
</dbReference>
<dbReference type="Pfam" id="PF00180">
    <property type="entry name" value="Iso_dh"/>
    <property type="match status" value="1"/>
</dbReference>
<dbReference type="SMART" id="SM01329">
    <property type="entry name" value="Iso_dh"/>
    <property type="match status" value="1"/>
</dbReference>
<dbReference type="SUPFAM" id="SSF53659">
    <property type="entry name" value="Isocitrate/Isopropylmalate dehydrogenase-like"/>
    <property type="match status" value="1"/>
</dbReference>
<dbReference type="PROSITE" id="PS00470">
    <property type="entry name" value="IDH_IMDH"/>
    <property type="match status" value="1"/>
</dbReference>
<accession>Q28480</accession>
<reference key="1">
    <citation type="journal article" date="1995" name="Biochem. J.">
        <title>Molecular cloning and deduced amino acid sequences of the alpha- and beta-subunits of mammalian NAD(+)-isocitrate dehydrogenase.</title>
        <authorList>
            <person name="Nichols B.J."/>
            <person name="Perry A.C.F."/>
            <person name="Hall L."/>
            <person name="Denton R.M."/>
        </authorList>
    </citation>
    <scope>NUCLEOTIDE SEQUENCE [MRNA]</scope>
    <source>
        <tissue>Testis</tissue>
    </source>
</reference>
<organism>
    <name type="scientific">Macaca fascicularis</name>
    <name type="common">Crab-eating macaque</name>
    <name type="synonym">Cynomolgus monkey</name>
    <dbReference type="NCBI Taxonomy" id="9541"/>
    <lineage>
        <taxon>Eukaryota</taxon>
        <taxon>Metazoa</taxon>
        <taxon>Chordata</taxon>
        <taxon>Craniata</taxon>
        <taxon>Vertebrata</taxon>
        <taxon>Euteleostomi</taxon>
        <taxon>Mammalia</taxon>
        <taxon>Eutheria</taxon>
        <taxon>Euarchontoglires</taxon>
        <taxon>Primates</taxon>
        <taxon>Haplorrhini</taxon>
        <taxon>Catarrhini</taxon>
        <taxon>Cercopithecidae</taxon>
        <taxon>Cercopithecinae</taxon>
        <taxon>Macaca</taxon>
    </lineage>
</organism>
<keyword id="KW-0007">Acetylation</keyword>
<keyword id="KW-0460">Magnesium</keyword>
<keyword id="KW-0464">Manganese</keyword>
<keyword id="KW-0479">Metal-binding</keyword>
<keyword id="KW-0496">Mitochondrion</keyword>
<keyword id="KW-0520">NAD</keyword>
<keyword id="KW-0560">Oxidoreductase</keyword>
<keyword id="KW-0597">Phosphoprotein</keyword>
<keyword id="KW-1185">Reference proteome</keyword>
<keyword id="KW-0809">Transit peptide</keyword>
<keyword id="KW-0816">Tricarboxylic acid cycle</keyword>
<proteinExistence type="evidence at transcript level"/>
<name>IDH3A_MACFA</name>
<protein>
    <recommendedName>
        <fullName evidence="1">Isocitrate dehydrogenase [NAD] subunit alpha, mitochondrial</fullName>
        <ecNumber evidence="1">1.1.1.41</ecNumber>
    </recommendedName>
    <alternativeName>
        <fullName>Isocitric dehydrogenase subunit alpha</fullName>
    </alternativeName>
    <alternativeName>
        <fullName>NAD(+)-specific ICDH subunit alpha</fullName>
    </alternativeName>
</protein>
<comment type="function">
    <text evidence="1">Catalytic subunit of the enzyme which catalyzes the decarboxylation of isocitrate (ICT) into alpha-ketoglutarate. The heterodimer composed of the alpha (IDH3A) and beta (IDH3B) subunits and the heterodimer composed of the alpha (IDH3A) and gamma (IDH3G) subunits, have considerable basal activity but the full activity of the heterotetramer (containing two subunits of IDH3A, one of IDH3B and one of IDH3G) requires the assembly and cooperative function of both heterodimers.</text>
</comment>
<comment type="catalytic activity">
    <reaction evidence="1">
        <text>D-threo-isocitrate + NAD(+) = 2-oxoglutarate + CO2 + NADH</text>
        <dbReference type="Rhea" id="RHEA:23632"/>
        <dbReference type="ChEBI" id="CHEBI:15562"/>
        <dbReference type="ChEBI" id="CHEBI:16526"/>
        <dbReference type="ChEBI" id="CHEBI:16810"/>
        <dbReference type="ChEBI" id="CHEBI:57540"/>
        <dbReference type="ChEBI" id="CHEBI:57945"/>
        <dbReference type="EC" id="1.1.1.41"/>
    </reaction>
    <physiologicalReaction direction="left-to-right" evidence="1">
        <dbReference type="Rhea" id="RHEA:23633"/>
    </physiologicalReaction>
</comment>
<comment type="cofactor">
    <cofactor evidence="1">
        <name>Mg(2+)</name>
        <dbReference type="ChEBI" id="CHEBI:18420"/>
    </cofactor>
    <cofactor evidence="1">
        <name>Mn(2+)</name>
        <dbReference type="ChEBI" id="CHEBI:29035"/>
    </cofactor>
    <text evidence="1">Divalent metal cations; Mn(2+) or Mg(2+). Activity higher in presence of Mn(2+) than of Mg(2+). Binds 1 Mg(2+) or Mn(2+) ion per subunit.</text>
</comment>
<comment type="activity regulation">
    <text evidence="1">The heterotetramer and the heterodimer composed of IDH3A and IDH3G subunits can be allosterically activated by citrate (CIT) or/and ADP, and the two activators can act independently or synergistically. The heterodimer composed of IDH3A and IDH3B subunits cannot be allosterically regulated and the allosteric regulation of the heterotetramer is through the IDH3G subunit and not the IDH3B subunit. The IDH3G subunit contains the allosteric site which consists of a CIT-binding site and an ADP-binding site, and the binding of CIT and ADP causes conformational changes at the allosteric site which are transmitted to the active site in the catalytic subunit (IDH3A) through a cascade of conformational changes at the heterodimer interface, leading to stabilization of the isocitrate-binding at the active site and thus activation of the enzyme. ATP can activate the heterotetramer and the heterodimer composed of IDH3A and IDH3G subunits at low concentrations but inhibits their activities at high concentrations, whereas ATP exhibits only inhibitory effect on the heterodimer composed of IDH3A and IDH3B subunits.</text>
</comment>
<comment type="subunit">
    <text evidence="1">Heterooligomer of subunits alpha (IDH3A), beta (IDH3B), and gamma (IDH3G) in the apparent ratio of 2:1:1. The heterodimer containing one IDH3A and one IDH3B subunit and the heterodimer containing one IDH3A and one IDH3G subunit assemble into a heterotetramer (which contains two subunits of IDH3A, one of IDH3B and one of IDH3G) and further into the heterooctamer.</text>
</comment>
<comment type="subcellular location">
    <subcellularLocation>
        <location>Mitochondrion</location>
    </subcellularLocation>
</comment>
<comment type="similarity">
    <text evidence="4">Belongs to the isocitrate and isopropylmalate dehydrogenases family.</text>
</comment>
<comment type="sequence caution" evidence="4">
    <conflict type="erroneous initiation">
        <sequence resource="EMBL-CDS" id="CAA60637"/>
    </conflict>
</comment>